<feature type="chain" id="PRO_0000165437" description="S-adenosylmethionine:tRNA ribosyltransferase-isomerase">
    <location>
        <begin position="1"/>
        <end position="356"/>
    </location>
</feature>
<dbReference type="EC" id="2.4.99.17" evidence="1"/>
<dbReference type="EMBL" id="AE005674">
    <property type="protein sequence ID" value="AAN42000.1"/>
    <property type="molecule type" value="Genomic_DNA"/>
</dbReference>
<dbReference type="EMBL" id="AE014073">
    <property type="protein sequence ID" value="AAP15877.1"/>
    <property type="molecule type" value="Genomic_DNA"/>
</dbReference>
<dbReference type="RefSeq" id="NP_706293.1">
    <property type="nucleotide sequence ID" value="NC_004337.2"/>
</dbReference>
<dbReference type="RefSeq" id="WP_001266503.1">
    <property type="nucleotide sequence ID" value="NZ_WPGW01000023.1"/>
</dbReference>
<dbReference type="SMR" id="P0A7G1"/>
<dbReference type="STRING" id="198214.SF0342"/>
<dbReference type="PaxDb" id="198214-SF0342"/>
<dbReference type="GeneID" id="1027666"/>
<dbReference type="GeneID" id="93777055"/>
<dbReference type="KEGG" id="sfl:SF0342"/>
<dbReference type="KEGG" id="sfx:S0350"/>
<dbReference type="PATRIC" id="fig|198214.7.peg.393"/>
<dbReference type="HOGENOM" id="CLU_039110_1_0_6"/>
<dbReference type="UniPathway" id="UPA00392"/>
<dbReference type="Proteomes" id="UP000001006">
    <property type="component" value="Chromosome"/>
</dbReference>
<dbReference type="Proteomes" id="UP000002673">
    <property type="component" value="Chromosome"/>
</dbReference>
<dbReference type="GO" id="GO:0005737">
    <property type="term" value="C:cytoplasm"/>
    <property type="evidence" value="ECO:0007669"/>
    <property type="project" value="UniProtKB-SubCell"/>
</dbReference>
<dbReference type="GO" id="GO:0051075">
    <property type="term" value="F:S-adenosylmethionine:tRNA ribosyltransferase-isomerase activity"/>
    <property type="evidence" value="ECO:0007669"/>
    <property type="project" value="UniProtKB-EC"/>
</dbReference>
<dbReference type="GO" id="GO:0008616">
    <property type="term" value="P:queuosine biosynthetic process"/>
    <property type="evidence" value="ECO:0007669"/>
    <property type="project" value="UniProtKB-UniRule"/>
</dbReference>
<dbReference type="GO" id="GO:0002099">
    <property type="term" value="P:tRNA wobble guanine modification"/>
    <property type="evidence" value="ECO:0007669"/>
    <property type="project" value="TreeGrafter"/>
</dbReference>
<dbReference type="FunFam" id="2.40.10.240:FF:000001">
    <property type="entry name" value="S-adenosylmethionine:tRNA ribosyltransferase-isomerase"/>
    <property type="match status" value="1"/>
</dbReference>
<dbReference type="FunFam" id="3.40.1780.10:FF:000001">
    <property type="entry name" value="S-adenosylmethionine:tRNA ribosyltransferase-isomerase"/>
    <property type="match status" value="1"/>
</dbReference>
<dbReference type="Gene3D" id="2.40.10.240">
    <property type="entry name" value="QueA-like"/>
    <property type="match status" value="1"/>
</dbReference>
<dbReference type="Gene3D" id="3.40.1780.10">
    <property type="entry name" value="QueA-like"/>
    <property type="match status" value="1"/>
</dbReference>
<dbReference type="HAMAP" id="MF_00113">
    <property type="entry name" value="QueA"/>
    <property type="match status" value="1"/>
</dbReference>
<dbReference type="InterPro" id="IPR003699">
    <property type="entry name" value="QueA"/>
</dbReference>
<dbReference type="InterPro" id="IPR042118">
    <property type="entry name" value="QueA_dom1"/>
</dbReference>
<dbReference type="InterPro" id="IPR042119">
    <property type="entry name" value="QueA_dom2"/>
</dbReference>
<dbReference type="InterPro" id="IPR036100">
    <property type="entry name" value="QueA_sf"/>
</dbReference>
<dbReference type="NCBIfam" id="NF001140">
    <property type="entry name" value="PRK00147.1"/>
    <property type="match status" value="1"/>
</dbReference>
<dbReference type="NCBIfam" id="TIGR00113">
    <property type="entry name" value="queA"/>
    <property type="match status" value="1"/>
</dbReference>
<dbReference type="PANTHER" id="PTHR30307">
    <property type="entry name" value="S-ADENOSYLMETHIONINE:TRNA RIBOSYLTRANSFERASE-ISOMERASE"/>
    <property type="match status" value="1"/>
</dbReference>
<dbReference type="PANTHER" id="PTHR30307:SF0">
    <property type="entry name" value="S-ADENOSYLMETHIONINE:TRNA RIBOSYLTRANSFERASE-ISOMERASE"/>
    <property type="match status" value="1"/>
</dbReference>
<dbReference type="Pfam" id="PF02547">
    <property type="entry name" value="Queuosine_synth"/>
    <property type="match status" value="1"/>
</dbReference>
<dbReference type="SUPFAM" id="SSF111337">
    <property type="entry name" value="QueA-like"/>
    <property type="match status" value="1"/>
</dbReference>
<evidence type="ECO:0000255" key="1">
    <source>
        <dbReference type="HAMAP-Rule" id="MF_00113"/>
    </source>
</evidence>
<proteinExistence type="inferred from homology"/>
<comment type="function">
    <text evidence="1">Transfers and isomerizes the ribose moiety from AdoMet to the 7-aminomethyl group of 7-deazaguanine (preQ1-tRNA) to give epoxyqueuosine (oQ-tRNA).</text>
</comment>
<comment type="catalytic activity">
    <reaction evidence="1">
        <text>7-aminomethyl-7-carbaguanosine(34) in tRNA + S-adenosyl-L-methionine = epoxyqueuosine(34) in tRNA + adenine + L-methionine + 2 H(+)</text>
        <dbReference type="Rhea" id="RHEA:32155"/>
        <dbReference type="Rhea" id="RHEA-COMP:10342"/>
        <dbReference type="Rhea" id="RHEA-COMP:18582"/>
        <dbReference type="ChEBI" id="CHEBI:15378"/>
        <dbReference type="ChEBI" id="CHEBI:16708"/>
        <dbReference type="ChEBI" id="CHEBI:57844"/>
        <dbReference type="ChEBI" id="CHEBI:59789"/>
        <dbReference type="ChEBI" id="CHEBI:82833"/>
        <dbReference type="ChEBI" id="CHEBI:194443"/>
        <dbReference type="EC" id="2.4.99.17"/>
    </reaction>
</comment>
<comment type="pathway">
    <text evidence="1">tRNA modification; tRNA-queuosine biosynthesis.</text>
</comment>
<comment type="subunit">
    <text evidence="1">Monomer.</text>
</comment>
<comment type="subcellular location">
    <subcellularLocation>
        <location evidence="1">Cytoplasm</location>
    </subcellularLocation>
</comment>
<comment type="similarity">
    <text evidence="1">Belongs to the QueA family.</text>
</comment>
<name>QUEA_SHIFL</name>
<gene>
    <name evidence="1" type="primary">queA</name>
    <name type="ordered locus">SF0342</name>
    <name type="ordered locus">S0350</name>
</gene>
<organism>
    <name type="scientific">Shigella flexneri</name>
    <dbReference type="NCBI Taxonomy" id="623"/>
    <lineage>
        <taxon>Bacteria</taxon>
        <taxon>Pseudomonadati</taxon>
        <taxon>Pseudomonadota</taxon>
        <taxon>Gammaproteobacteria</taxon>
        <taxon>Enterobacterales</taxon>
        <taxon>Enterobacteriaceae</taxon>
        <taxon>Shigella</taxon>
    </lineage>
</organism>
<accession>P0A7G1</accession>
<accession>P21516</accession>
<protein>
    <recommendedName>
        <fullName evidence="1">S-adenosylmethionine:tRNA ribosyltransferase-isomerase</fullName>
        <ecNumber evidence="1">2.4.99.17</ecNumber>
    </recommendedName>
    <alternativeName>
        <fullName evidence="1">Queuosine biosynthesis protein QueA</fullName>
    </alternativeName>
</protein>
<sequence length="356" mass="39431">MRVTDFSFELPESLIAHYPMPERSSCRLLSLDGPTGALTHGTFTDLLDKLNPGDLLVFNNTRVIPARLFGRKASGGKIEVLVERMLDDKRILAHIRASKAPKPGAELLLGDDESINATMTARHGALFEVEFNDERSVLDILNSIGHMPLPPYIDRPDEDADRELYQTVYSEKPGAVAAPTAGLHFDEPLLEKLRAKGVEMAFVTLHVGAGTFQPVRVDTIEDHIMHSEYAEVPQDVVDAVLAAKARGNRVIAVGTTSVRSLESAAQAAKNDLIEPFFDDTQIFIYPGFQYKVVDALVTNFHLPESTLIMLVSAFAGYQHTMNAYKAAVEEKYRFFSYGDAMFITYNPQAINERVGE</sequence>
<reference key="1">
    <citation type="journal article" date="2002" name="Nucleic Acids Res.">
        <title>Genome sequence of Shigella flexneri 2a: insights into pathogenicity through comparison with genomes of Escherichia coli K12 and O157.</title>
        <authorList>
            <person name="Jin Q."/>
            <person name="Yuan Z."/>
            <person name="Xu J."/>
            <person name="Wang Y."/>
            <person name="Shen Y."/>
            <person name="Lu W."/>
            <person name="Wang J."/>
            <person name="Liu H."/>
            <person name="Yang J."/>
            <person name="Yang F."/>
            <person name="Zhang X."/>
            <person name="Zhang J."/>
            <person name="Yang G."/>
            <person name="Wu H."/>
            <person name="Qu D."/>
            <person name="Dong J."/>
            <person name="Sun L."/>
            <person name="Xue Y."/>
            <person name="Zhao A."/>
            <person name="Gao Y."/>
            <person name="Zhu J."/>
            <person name="Kan B."/>
            <person name="Ding K."/>
            <person name="Chen S."/>
            <person name="Cheng H."/>
            <person name="Yao Z."/>
            <person name="He B."/>
            <person name="Chen R."/>
            <person name="Ma D."/>
            <person name="Qiang B."/>
            <person name="Wen Y."/>
            <person name="Hou Y."/>
            <person name="Yu J."/>
        </authorList>
    </citation>
    <scope>NUCLEOTIDE SEQUENCE [LARGE SCALE GENOMIC DNA]</scope>
    <source>
        <strain>301 / Serotype 2a</strain>
    </source>
</reference>
<reference key="2">
    <citation type="journal article" date="2003" name="Infect. Immun.">
        <title>Complete genome sequence and comparative genomics of Shigella flexneri serotype 2a strain 2457T.</title>
        <authorList>
            <person name="Wei J."/>
            <person name="Goldberg M.B."/>
            <person name="Burland V."/>
            <person name="Venkatesan M.M."/>
            <person name="Deng W."/>
            <person name="Fournier G."/>
            <person name="Mayhew G.F."/>
            <person name="Plunkett G. III"/>
            <person name="Rose D.J."/>
            <person name="Darling A."/>
            <person name="Mau B."/>
            <person name="Perna N.T."/>
            <person name="Payne S.M."/>
            <person name="Runyen-Janecky L.J."/>
            <person name="Zhou S."/>
            <person name="Schwartz D.C."/>
            <person name="Blattner F.R."/>
        </authorList>
    </citation>
    <scope>NUCLEOTIDE SEQUENCE [LARGE SCALE GENOMIC DNA]</scope>
    <source>
        <strain>ATCC 700930 / 2457T / Serotype 2a</strain>
    </source>
</reference>
<keyword id="KW-0963">Cytoplasm</keyword>
<keyword id="KW-0671">Queuosine biosynthesis</keyword>
<keyword id="KW-1185">Reference proteome</keyword>
<keyword id="KW-0949">S-adenosyl-L-methionine</keyword>
<keyword id="KW-0808">Transferase</keyword>